<reference key="1">
    <citation type="journal article" date="2008" name="Environ. Microbiol.">
        <title>The complete genome sequence of Moorella thermoacetica (f. Clostridium thermoaceticum).</title>
        <authorList>
            <person name="Pierce E."/>
            <person name="Xie G."/>
            <person name="Barabote R.D."/>
            <person name="Saunders E."/>
            <person name="Han C.S."/>
            <person name="Detter J.C."/>
            <person name="Richardson P."/>
            <person name="Brettin T.S."/>
            <person name="Das A."/>
            <person name="Ljungdahl L.G."/>
            <person name="Ragsdale S.W."/>
        </authorList>
    </citation>
    <scope>NUCLEOTIDE SEQUENCE [LARGE SCALE GENOMIC DNA]</scope>
    <source>
        <strain>ATCC 39073 / JCM 9320</strain>
    </source>
</reference>
<sequence>MHDYFGGWFKLEQEVARQLRILRRGVAEIVPEEDLQAKLRKSLATGKPLKVKLGLDPTAPDIHLGHTVVLQKLRQFQELGHQVIIIIGDFTGRIGDPTGKSETRRQLTEAEILANAETYKEQIFKVLDPEQTRVTFNSHWLGKLTFAEVIELAARTTVARMLERDDFARRFQENRPISIHEFFYPLMQGYDSVALAADVELGGTDQKFNLLMGRHLQREYGQEPQVAMMMPILPGLDGVQKMSKSLGNYIGIKESPREMYGKTMSLPDELMLTYYELVTAVPLEELAAIRQGLASGSLHPRDAKMRLAREIVAMYHTPEAALEAEREFRQVFQQHDLPDDMPELTIKEDRVWLPRLMVQAGLAPSTSEARRLIRQGAVKIDGERVTDPDTEVEVREGQVLQAGKRKFARLHTF</sequence>
<name>SYY_MOOTA</name>
<comment type="function">
    <text evidence="1">Catalyzes the attachment of tyrosine to tRNA(Tyr) in a two-step reaction: tyrosine is first activated by ATP to form Tyr-AMP and then transferred to the acceptor end of tRNA(Tyr).</text>
</comment>
<comment type="catalytic activity">
    <reaction evidence="1">
        <text>tRNA(Tyr) + L-tyrosine + ATP = L-tyrosyl-tRNA(Tyr) + AMP + diphosphate + H(+)</text>
        <dbReference type="Rhea" id="RHEA:10220"/>
        <dbReference type="Rhea" id="RHEA-COMP:9706"/>
        <dbReference type="Rhea" id="RHEA-COMP:9707"/>
        <dbReference type="ChEBI" id="CHEBI:15378"/>
        <dbReference type="ChEBI" id="CHEBI:30616"/>
        <dbReference type="ChEBI" id="CHEBI:33019"/>
        <dbReference type="ChEBI" id="CHEBI:58315"/>
        <dbReference type="ChEBI" id="CHEBI:78442"/>
        <dbReference type="ChEBI" id="CHEBI:78536"/>
        <dbReference type="ChEBI" id="CHEBI:456215"/>
        <dbReference type="EC" id="6.1.1.1"/>
    </reaction>
</comment>
<comment type="subunit">
    <text evidence="1">Homodimer.</text>
</comment>
<comment type="subcellular location">
    <subcellularLocation>
        <location evidence="1">Cytoplasm</location>
    </subcellularLocation>
</comment>
<comment type="similarity">
    <text evidence="1">Belongs to the class-I aminoacyl-tRNA synthetase family. TyrS type 2 subfamily.</text>
</comment>
<dbReference type="EC" id="6.1.1.1" evidence="1"/>
<dbReference type="EMBL" id="CP000232">
    <property type="protein sequence ID" value="ABC20011.1"/>
    <property type="molecule type" value="Genomic_DNA"/>
</dbReference>
<dbReference type="RefSeq" id="YP_430554.1">
    <property type="nucleotide sequence ID" value="NC_007644.1"/>
</dbReference>
<dbReference type="SMR" id="Q2RHS8"/>
<dbReference type="STRING" id="264732.Moth_1709"/>
<dbReference type="EnsemblBacteria" id="ABC20011">
    <property type="protein sequence ID" value="ABC20011"/>
    <property type="gene ID" value="Moth_1709"/>
</dbReference>
<dbReference type="KEGG" id="mta:Moth_1709"/>
<dbReference type="PATRIC" id="fig|264732.11.peg.1851"/>
<dbReference type="eggNOG" id="COG0162">
    <property type="taxonomic scope" value="Bacteria"/>
</dbReference>
<dbReference type="HOGENOM" id="CLU_024003_5_0_9"/>
<dbReference type="OrthoDB" id="9804243at2"/>
<dbReference type="GO" id="GO:0005829">
    <property type="term" value="C:cytosol"/>
    <property type="evidence" value="ECO:0007669"/>
    <property type="project" value="TreeGrafter"/>
</dbReference>
<dbReference type="GO" id="GO:0005524">
    <property type="term" value="F:ATP binding"/>
    <property type="evidence" value="ECO:0007669"/>
    <property type="project" value="UniProtKB-UniRule"/>
</dbReference>
<dbReference type="GO" id="GO:0003723">
    <property type="term" value="F:RNA binding"/>
    <property type="evidence" value="ECO:0007669"/>
    <property type="project" value="UniProtKB-KW"/>
</dbReference>
<dbReference type="GO" id="GO:0004831">
    <property type="term" value="F:tyrosine-tRNA ligase activity"/>
    <property type="evidence" value="ECO:0007669"/>
    <property type="project" value="UniProtKB-UniRule"/>
</dbReference>
<dbReference type="GO" id="GO:0006437">
    <property type="term" value="P:tyrosyl-tRNA aminoacylation"/>
    <property type="evidence" value="ECO:0007669"/>
    <property type="project" value="UniProtKB-UniRule"/>
</dbReference>
<dbReference type="CDD" id="cd00165">
    <property type="entry name" value="S4"/>
    <property type="match status" value="1"/>
</dbReference>
<dbReference type="CDD" id="cd00805">
    <property type="entry name" value="TyrRS_core"/>
    <property type="match status" value="1"/>
</dbReference>
<dbReference type="FunFam" id="1.10.240.10:FF:000006">
    <property type="entry name" value="Tyrosine--tRNA ligase"/>
    <property type="match status" value="1"/>
</dbReference>
<dbReference type="FunFam" id="3.10.290.10:FF:000022">
    <property type="entry name" value="Tyrosine--tRNA ligase"/>
    <property type="match status" value="1"/>
</dbReference>
<dbReference type="FunFam" id="3.40.50.620:FF:000061">
    <property type="entry name" value="Tyrosine--tRNA ligase"/>
    <property type="match status" value="1"/>
</dbReference>
<dbReference type="Gene3D" id="3.40.50.620">
    <property type="entry name" value="HUPs"/>
    <property type="match status" value="1"/>
</dbReference>
<dbReference type="Gene3D" id="3.10.290.10">
    <property type="entry name" value="RNA-binding S4 domain"/>
    <property type="match status" value="1"/>
</dbReference>
<dbReference type="Gene3D" id="1.10.240.10">
    <property type="entry name" value="Tyrosyl-Transfer RNA Synthetase"/>
    <property type="match status" value="1"/>
</dbReference>
<dbReference type="HAMAP" id="MF_02007">
    <property type="entry name" value="Tyr_tRNA_synth_type2"/>
    <property type="match status" value="1"/>
</dbReference>
<dbReference type="InterPro" id="IPR001412">
    <property type="entry name" value="aa-tRNA-synth_I_CS"/>
</dbReference>
<dbReference type="InterPro" id="IPR002305">
    <property type="entry name" value="aa-tRNA-synth_Ic"/>
</dbReference>
<dbReference type="InterPro" id="IPR014729">
    <property type="entry name" value="Rossmann-like_a/b/a_fold"/>
</dbReference>
<dbReference type="InterPro" id="IPR002942">
    <property type="entry name" value="S4_RNA-bd"/>
</dbReference>
<dbReference type="InterPro" id="IPR036986">
    <property type="entry name" value="S4_RNA-bd_sf"/>
</dbReference>
<dbReference type="InterPro" id="IPR002307">
    <property type="entry name" value="Tyr-tRNA-ligase"/>
</dbReference>
<dbReference type="InterPro" id="IPR024088">
    <property type="entry name" value="Tyr-tRNA-ligase_bac-type"/>
</dbReference>
<dbReference type="InterPro" id="IPR024108">
    <property type="entry name" value="Tyr-tRNA-ligase_bac_2"/>
</dbReference>
<dbReference type="NCBIfam" id="TIGR00234">
    <property type="entry name" value="tyrS"/>
    <property type="match status" value="1"/>
</dbReference>
<dbReference type="PANTHER" id="PTHR11766:SF1">
    <property type="entry name" value="TYROSINE--TRNA LIGASE"/>
    <property type="match status" value="1"/>
</dbReference>
<dbReference type="PANTHER" id="PTHR11766">
    <property type="entry name" value="TYROSYL-TRNA SYNTHETASE"/>
    <property type="match status" value="1"/>
</dbReference>
<dbReference type="Pfam" id="PF01479">
    <property type="entry name" value="S4"/>
    <property type="match status" value="1"/>
</dbReference>
<dbReference type="Pfam" id="PF00579">
    <property type="entry name" value="tRNA-synt_1b"/>
    <property type="match status" value="1"/>
</dbReference>
<dbReference type="PRINTS" id="PR01040">
    <property type="entry name" value="TRNASYNTHTYR"/>
</dbReference>
<dbReference type="SMART" id="SM00363">
    <property type="entry name" value="S4"/>
    <property type="match status" value="1"/>
</dbReference>
<dbReference type="SUPFAM" id="SSF55174">
    <property type="entry name" value="Alpha-L RNA-binding motif"/>
    <property type="match status" value="1"/>
</dbReference>
<dbReference type="SUPFAM" id="SSF52374">
    <property type="entry name" value="Nucleotidylyl transferase"/>
    <property type="match status" value="1"/>
</dbReference>
<dbReference type="PROSITE" id="PS00178">
    <property type="entry name" value="AA_TRNA_LIGASE_I"/>
    <property type="match status" value="1"/>
</dbReference>
<dbReference type="PROSITE" id="PS50889">
    <property type="entry name" value="S4"/>
    <property type="match status" value="1"/>
</dbReference>
<proteinExistence type="inferred from homology"/>
<accession>Q2RHS8</accession>
<gene>
    <name evidence="1" type="primary">tyrS</name>
    <name type="ordered locus">Moth_1709</name>
</gene>
<protein>
    <recommendedName>
        <fullName evidence="1">Tyrosine--tRNA ligase</fullName>
        <ecNumber evidence="1">6.1.1.1</ecNumber>
    </recommendedName>
    <alternativeName>
        <fullName evidence="1">Tyrosyl-tRNA synthetase</fullName>
        <shortName evidence="1">TyrRS</shortName>
    </alternativeName>
</protein>
<organism>
    <name type="scientific">Moorella thermoacetica (strain ATCC 39073 / JCM 9320)</name>
    <dbReference type="NCBI Taxonomy" id="264732"/>
    <lineage>
        <taxon>Bacteria</taxon>
        <taxon>Bacillati</taxon>
        <taxon>Bacillota</taxon>
        <taxon>Clostridia</taxon>
        <taxon>Moorellales</taxon>
        <taxon>Moorellaceae</taxon>
        <taxon>Moorella</taxon>
    </lineage>
</organism>
<feature type="chain" id="PRO_0000236735" description="Tyrosine--tRNA ligase">
    <location>
        <begin position="1"/>
        <end position="413"/>
    </location>
</feature>
<feature type="domain" description="S4 RNA-binding" evidence="1">
    <location>
        <begin position="351"/>
        <end position="412"/>
    </location>
</feature>
<feature type="short sequence motif" description="'HIGH' region">
    <location>
        <begin position="57"/>
        <end position="66"/>
    </location>
</feature>
<feature type="short sequence motif" description="'KMSKS' region">
    <location>
        <begin position="241"/>
        <end position="245"/>
    </location>
</feature>
<feature type="binding site" evidence="1">
    <location>
        <position position="244"/>
    </location>
    <ligand>
        <name>ATP</name>
        <dbReference type="ChEBI" id="CHEBI:30616"/>
    </ligand>
</feature>
<keyword id="KW-0030">Aminoacyl-tRNA synthetase</keyword>
<keyword id="KW-0067">ATP-binding</keyword>
<keyword id="KW-0963">Cytoplasm</keyword>
<keyword id="KW-0436">Ligase</keyword>
<keyword id="KW-0547">Nucleotide-binding</keyword>
<keyword id="KW-0648">Protein biosynthesis</keyword>
<keyword id="KW-0694">RNA-binding</keyword>
<evidence type="ECO:0000255" key="1">
    <source>
        <dbReference type="HAMAP-Rule" id="MF_02007"/>
    </source>
</evidence>